<sequence length="246" mass="27646">MEPNTVIPKYNVRGFEIWGFRDMAQVLDHLLGSGPVKTGTLVAMNAEKLLKAEDDTALCELIKNAEYLYADGISMVRAIRRKYPQAELSRVAGADLWEALMQRAGQQGTPVFLVGGKPDVLAETEAKLRAQWNVNLVGSQDGYFTPEQREALFARIAASGAAIVTVAMGSPKQEIFMRDCRKFYPDALYMGVGGTYDVFTGHVKRAPKIWQNMGLEWLYRLLAQPSRIRRQLKLLKFVGYYYSGRL</sequence>
<name>WECG_YERPS</name>
<organism>
    <name type="scientific">Yersinia pseudotuberculosis serotype I (strain IP32953)</name>
    <dbReference type="NCBI Taxonomy" id="273123"/>
    <lineage>
        <taxon>Bacteria</taxon>
        <taxon>Pseudomonadati</taxon>
        <taxon>Pseudomonadota</taxon>
        <taxon>Gammaproteobacteria</taxon>
        <taxon>Enterobacterales</taxon>
        <taxon>Yersiniaceae</taxon>
        <taxon>Yersinia</taxon>
    </lineage>
</organism>
<keyword id="KW-0328">Glycosyltransferase</keyword>
<keyword id="KW-0808">Transferase</keyword>
<dbReference type="EC" id="2.4.1.180" evidence="1"/>
<dbReference type="EMBL" id="BX936398">
    <property type="protein sequence ID" value="CAH19419.1"/>
    <property type="molecule type" value="Genomic_DNA"/>
</dbReference>
<dbReference type="RefSeq" id="WP_011191504.1">
    <property type="nucleotide sequence ID" value="NC_006155.1"/>
</dbReference>
<dbReference type="SMR" id="Q66G05"/>
<dbReference type="CAZy" id="GT26">
    <property type="family name" value="Glycosyltransferase Family 26"/>
</dbReference>
<dbReference type="GeneID" id="49787845"/>
<dbReference type="KEGG" id="ypo:BZ17_2410"/>
<dbReference type="KEGG" id="yps:YPTB0179"/>
<dbReference type="PATRIC" id="fig|273123.14.peg.2531"/>
<dbReference type="UniPathway" id="UPA00566"/>
<dbReference type="Proteomes" id="UP000001011">
    <property type="component" value="Chromosome"/>
</dbReference>
<dbReference type="GO" id="GO:0047241">
    <property type="term" value="F:lipopolysaccharide N-acetylmannosaminouronosyltransferase activity"/>
    <property type="evidence" value="ECO:0007669"/>
    <property type="project" value="UniProtKB-UniRule"/>
</dbReference>
<dbReference type="GO" id="GO:0009246">
    <property type="term" value="P:enterobacterial common antigen biosynthetic process"/>
    <property type="evidence" value="ECO:0007669"/>
    <property type="project" value="UniProtKB-UniRule"/>
</dbReference>
<dbReference type="CDD" id="cd06533">
    <property type="entry name" value="Glyco_transf_WecG_TagA"/>
    <property type="match status" value="1"/>
</dbReference>
<dbReference type="HAMAP" id="MF_01001">
    <property type="entry name" value="WecG_RffM"/>
    <property type="match status" value="1"/>
</dbReference>
<dbReference type="InterPro" id="IPR023085">
    <property type="entry name" value="UDP-ManNAcA_Trfase_WecG"/>
</dbReference>
<dbReference type="InterPro" id="IPR004629">
    <property type="entry name" value="WecG_TagA_CpsF"/>
</dbReference>
<dbReference type="NCBIfam" id="NF002980">
    <property type="entry name" value="PRK03692.1"/>
    <property type="match status" value="1"/>
</dbReference>
<dbReference type="NCBIfam" id="TIGR00696">
    <property type="entry name" value="wecG_tagA_cpsF"/>
    <property type="match status" value="1"/>
</dbReference>
<dbReference type="PANTHER" id="PTHR34136">
    <property type="match status" value="1"/>
</dbReference>
<dbReference type="PANTHER" id="PTHR34136:SF1">
    <property type="entry name" value="UDP-N-ACETYL-D-MANNOSAMINURONIC ACID TRANSFERASE"/>
    <property type="match status" value="1"/>
</dbReference>
<dbReference type="Pfam" id="PF03808">
    <property type="entry name" value="Glyco_tran_WecG"/>
    <property type="match status" value="1"/>
</dbReference>
<comment type="function">
    <text evidence="1">Catalyzes the synthesis of Und-PP-GlcNAc-ManNAcA (Lipid II), the second lipid-linked intermediate involved in enterobacterial common antigen (ECA) synthesis.</text>
</comment>
<comment type="catalytic activity">
    <reaction evidence="1">
        <text>UDP-N-acetyl-alpha-D-mannosaminouronate + N-acetyl-alpha-D-glucosaminyl-di-trans,octa-cis-undecaprenyl diphosphate = beta-D-ManNAcA-(1-&gt;4)-alpha-D-GlcNAc-di-trans,octa-cis-undecaprenyl diphosphate + UDP + H(+)</text>
        <dbReference type="Rhea" id="RHEA:28366"/>
        <dbReference type="ChEBI" id="CHEBI:15378"/>
        <dbReference type="ChEBI" id="CHEBI:58223"/>
        <dbReference type="ChEBI" id="CHEBI:61495"/>
        <dbReference type="ChEBI" id="CHEBI:62959"/>
        <dbReference type="ChEBI" id="CHEBI:70731"/>
        <dbReference type="EC" id="2.4.1.180"/>
    </reaction>
</comment>
<comment type="pathway">
    <text evidence="1">Bacterial outer membrane biogenesis; enterobacterial common antigen biosynthesis.</text>
</comment>
<comment type="similarity">
    <text evidence="1">Belongs to the glycosyltransferase 26 family.</text>
</comment>
<reference key="1">
    <citation type="journal article" date="2004" name="Proc. Natl. Acad. Sci. U.S.A.">
        <title>Insights into the evolution of Yersinia pestis through whole-genome comparison with Yersinia pseudotuberculosis.</title>
        <authorList>
            <person name="Chain P.S.G."/>
            <person name="Carniel E."/>
            <person name="Larimer F.W."/>
            <person name="Lamerdin J."/>
            <person name="Stoutland P.O."/>
            <person name="Regala W.M."/>
            <person name="Georgescu A.M."/>
            <person name="Vergez L.M."/>
            <person name="Land M.L."/>
            <person name="Motin V.L."/>
            <person name="Brubaker R.R."/>
            <person name="Fowler J."/>
            <person name="Hinnebusch J."/>
            <person name="Marceau M."/>
            <person name="Medigue C."/>
            <person name="Simonet M."/>
            <person name="Chenal-Francisque V."/>
            <person name="Souza B."/>
            <person name="Dacheux D."/>
            <person name="Elliott J.M."/>
            <person name="Derbise A."/>
            <person name="Hauser L.J."/>
            <person name="Garcia E."/>
        </authorList>
    </citation>
    <scope>NUCLEOTIDE SEQUENCE [LARGE SCALE GENOMIC DNA]</scope>
    <source>
        <strain>IP32953</strain>
    </source>
</reference>
<feature type="chain" id="PRO_0000208437" description="UDP-N-acetyl-D-mannosaminuronic acid transferase">
    <location>
        <begin position="1"/>
        <end position="246"/>
    </location>
</feature>
<evidence type="ECO:0000255" key="1">
    <source>
        <dbReference type="HAMAP-Rule" id="MF_01001"/>
    </source>
</evidence>
<accession>Q66G05</accession>
<proteinExistence type="inferred from homology"/>
<protein>
    <recommendedName>
        <fullName evidence="1">UDP-N-acetyl-D-mannosaminuronic acid transferase</fullName>
        <shortName evidence="1">UDP-ManNAcA transferase</shortName>
        <ecNumber evidence="1">2.4.1.180</ecNumber>
    </recommendedName>
</protein>
<gene>
    <name evidence="1" type="primary">wecG</name>
    <name evidence="1" type="synonym">rffM</name>
    <name type="ordered locus">YPTB0179</name>
</gene>